<accession>A9MNC7</accession>
<feature type="chain" id="PRO_1000087970" description="tRNA U34 carboxymethyltransferase">
    <location>
        <begin position="1"/>
        <end position="323"/>
    </location>
</feature>
<feature type="binding site" evidence="1">
    <location>
        <position position="91"/>
    </location>
    <ligand>
        <name>carboxy-S-adenosyl-L-methionine</name>
        <dbReference type="ChEBI" id="CHEBI:134278"/>
    </ligand>
</feature>
<feature type="binding site" evidence="1">
    <location>
        <position position="105"/>
    </location>
    <ligand>
        <name>carboxy-S-adenosyl-L-methionine</name>
        <dbReference type="ChEBI" id="CHEBI:134278"/>
    </ligand>
</feature>
<feature type="binding site" evidence="1">
    <location>
        <position position="110"/>
    </location>
    <ligand>
        <name>carboxy-S-adenosyl-L-methionine</name>
        <dbReference type="ChEBI" id="CHEBI:134278"/>
    </ligand>
</feature>
<feature type="binding site" evidence="1">
    <location>
        <position position="130"/>
    </location>
    <ligand>
        <name>carboxy-S-adenosyl-L-methionine</name>
        <dbReference type="ChEBI" id="CHEBI:134278"/>
    </ligand>
</feature>
<feature type="binding site" evidence="1">
    <location>
        <begin position="152"/>
        <end position="154"/>
    </location>
    <ligand>
        <name>carboxy-S-adenosyl-L-methionine</name>
        <dbReference type="ChEBI" id="CHEBI:134278"/>
    </ligand>
</feature>
<feature type="binding site" evidence="1">
    <location>
        <begin position="181"/>
        <end position="182"/>
    </location>
    <ligand>
        <name>carboxy-S-adenosyl-L-methionine</name>
        <dbReference type="ChEBI" id="CHEBI:134278"/>
    </ligand>
</feature>
<feature type="binding site" evidence="1">
    <location>
        <position position="196"/>
    </location>
    <ligand>
        <name>carboxy-S-adenosyl-L-methionine</name>
        <dbReference type="ChEBI" id="CHEBI:134278"/>
    </ligand>
</feature>
<feature type="binding site" evidence="1">
    <location>
        <position position="200"/>
    </location>
    <ligand>
        <name>carboxy-S-adenosyl-L-methionine</name>
        <dbReference type="ChEBI" id="CHEBI:134278"/>
    </ligand>
</feature>
<feature type="binding site" evidence="1">
    <location>
        <position position="315"/>
    </location>
    <ligand>
        <name>carboxy-S-adenosyl-L-methionine</name>
        <dbReference type="ChEBI" id="CHEBI:134278"/>
    </ligand>
</feature>
<gene>
    <name evidence="1" type="primary">cmoB</name>
    <name type="ordered locus">SARI_01042</name>
</gene>
<reference key="1">
    <citation type="submission" date="2007-11" db="EMBL/GenBank/DDBJ databases">
        <authorList>
            <consortium name="The Salmonella enterica serovar Arizonae Genome Sequencing Project"/>
            <person name="McClelland M."/>
            <person name="Sanderson E.K."/>
            <person name="Porwollik S."/>
            <person name="Spieth J."/>
            <person name="Clifton W.S."/>
            <person name="Fulton R."/>
            <person name="Chunyan W."/>
            <person name="Wollam A."/>
            <person name="Shah N."/>
            <person name="Pepin K."/>
            <person name="Bhonagiri V."/>
            <person name="Nash W."/>
            <person name="Johnson M."/>
            <person name="Thiruvilangam P."/>
            <person name="Wilson R."/>
        </authorList>
    </citation>
    <scope>NUCLEOTIDE SEQUENCE [LARGE SCALE GENOMIC DNA]</scope>
    <source>
        <strain>ATCC BAA-731 / CDC346-86 / RSK2980</strain>
    </source>
</reference>
<proteinExistence type="inferred from homology"/>
<comment type="function">
    <text evidence="1">Catalyzes carboxymethyl transfer from carboxy-S-adenosyl-L-methionine (Cx-SAM) to 5-hydroxyuridine (ho5U) to form 5-carboxymethoxyuridine (cmo5U) at position 34 in tRNAs.</text>
</comment>
<comment type="catalytic activity">
    <reaction evidence="1">
        <text>carboxy-S-adenosyl-L-methionine + 5-hydroxyuridine(34) in tRNA = 5-carboxymethoxyuridine(34) in tRNA + S-adenosyl-L-homocysteine + H(+)</text>
        <dbReference type="Rhea" id="RHEA:52848"/>
        <dbReference type="Rhea" id="RHEA-COMP:13381"/>
        <dbReference type="Rhea" id="RHEA-COMP:13383"/>
        <dbReference type="ChEBI" id="CHEBI:15378"/>
        <dbReference type="ChEBI" id="CHEBI:57856"/>
        <dbReference type="ChEBI" id="CHEBI:134278"/>
        <dbReference type="ChEBI" id="CHEBI:136877"/>
        <dbReference type="ChEBI" id="CHEBI:136879"/>
    </reaction>
</comment>
<comment type="subunit">
    <text evidence="1">Homotetramer.</text>
</comment>
<comment type="similarity">
    <text evidence="1">Belongs to the class I-like SAM-binding methyltransferase superfamily. CmoB family.</text>
</comment>
<name>CMOB_SALAR</name>
<evidence type="ECO:0000255" key="1">
    <source>
        <dbReference type="HAMAP-Rule" id="MF_01590"/>
    </source>
</evidence>
<dbReference type="EC" id="2.5.1.-" evidence="1"/>
<dbReference type="EMBL" id="CP000880">
    <property type="protein sequence ID" value="ABX20950.1"/>
    <property type="molecule type" value="Genomic_DNA"/>
</dbReference>
<dbReference type="SMR" id="A9MNC7"/>
<dbReference type="STRING" id="41514.SARI_01042"/>
<dbReference type="KEGG" id="ses:SARI_01042"/>
<dbReference type="HOGENOM" id="CLU_052665_0_0_6"/>
<dbReference type="Proteomes" id="UP000002084">
    <property type="component" value="Chromosome"/>
</dbReference>
<dbReference type="GO" id="GO:0008168">
    <property type="term" value="F:methyltransferase activity"/>
    <property type="evidence" value="ECO:0007669"/>
    <property type="project" value="TreeGrafter"/>
</dbReference>
<dbReference type="GO" id="GO:0016765">
    <property type="term" value="F:transferase activity, transferring alkyl or aryl (other than methyl) groups"/>
    <property type="evidence" value="ECO:0007669"/>
    <property type="project" value="UniProtKB-UniRule"/>
</dbReference>
<dbReference type="GO" id="GO:0002098">
    <property type="term" value="P:tRNA wobble uridine modification"/>
    <property type="evidence" value="ECO:0007669"/>
    <property type="project" value="InterPro"/>
</dbReference>
<dbReference type="CDD" id="cd02440">
    <property type="entry name" value="AdoMet_MTases"/>
    <property type="match status" value="1"/>
</dbReference>
<dbReference type="FunFam" id="3.40.50.150:FF:000080">
    <property type="entry name" value="tRNA U34 carboxymethyltransferase"/>
    <property type="match status" value="1"/>
</dbReference>
<dbReference type="Gene3D" id="3.40.50.150">
    <property type="entry name" value="Vaccinia Virus protein VP39"/>
    <property type="match status" value="1"/>
</dbReference>
<dbReference type="HAMAP" id="MF_01590">
    <property type="entry name" value="tRNA_carboxymethyltr_CmoB"/>
    <property type="match status" value="1"/>
</dbReference>
<dbReference type="InterPro" id="IPR010017">
    <property type="entry name" value="CmoB"/>
</dbReference>
<dbReference type="InterPro" id="IPR027555">
    <property type="entry name" value="Mo5U34_MeTrfas-like"/>
</dbReference>
<dbReference type="InterPro" id="IPR029063">
    <property type="entry name" value="SAM-dependent_MTases_sf"/>
</dbReference>
<dbReference type="NCBIfam" id="NF011650">
    <property type="entry name" value="PRK15068.1"/>
    <property type="match status" value="1"/>
</dbReference>
<dbReference type="NCBIfam" id="TIGR00452">
    <property type="entry name" value="tRNA 5-methoxyuridine(34)/uridine 5-oxyacetic acid(34) synthase CmoB"/>
    <property type="match status" value="1"/>
</dbReference>
<dbReference type="PANTHER" id="PTHR43464">
    <property type="entry name" value="METHYLTRANSFERASE"/>
    <property type="match status" value="1"/>
</dbReference>
<dbReference type="PANTHER" id="PTHR43464:SF95">
    <property type="entry name" value="TRNA U34 CARBOXYMETHYLTRANSFERASE"/>
    <property type="match status" value="1"/>
</dbReference>
<dbReference type="Pfam" id="PF08003">
    <property type="entry name" value="Methyltransf_9"/>
    <property type="match status" value="1"/>
</dbReference>
<dbReference type="SUPFAM" id="SSF53335">
    <property type="entry name" value="S-adenosyl-L-methionine-dependent methyltransferases"/>
    <property type="match status" value="1"/>
</dbReference>
<protein>
    <recommendedName>
        <fullName evidence="1">tRNA U34 carboxymethyltransferase</fullName>
        <ecNumber evidence="1">2.5.1.-</ecNumber>
    </recommendedName>
</protein>
<sequence length="323" mass="36990">MIEFGNFYQLIAKNHLSHWLEILPAQIAAWQREQQHGLFKQWSNAVEFLPEITPWRLDLLHSVTAESEAPLSEGQLKRIDTLLRNLMPWRKGPFSLYGVNIDTEWRSDWKWERVLPHLSDLTGRTILDVGCGSGYHLWRMIGAGAHLAVGIDPTQLFLCQFEAVRKLLGNDQRAHLLPLGIEQLPALKAFDTVFSMGVLYHRRSPLEHLWQLKDQLVNEGELVLETLVVDGDENTVLVPGDRYAQMRNVYFIPSAPALKKWLEKCGLIDVRIADVCVTTTEEQRRTEWMVTESLADFLDPNDHSKTVEGYPAPLRAVLIARKP</sequence>
<organism>
    <name type="scientific">Salmonella arizonae (strain ATCC BAA-731 / CDC346-86 / RSK2980)</name>
    <dbReference type="NCBI Taxonomy" id="41514"/>
    <lineage>
        <taxon>Bacteria</taxon>
        <taxon>Pseudomonadati</taxon>
        <taxon>Pseudomonadota</taxon>
        <taxon>Gammaproteobacteria</taxon>
        <taxon>Enterobacterales</taxon>
        <taxon>Enterobacteriaceae</taxon>
        <taxon>Salmonella</taxon>
    </lineage>
</organism>
<keyword id="KW-1185">Reference proteome</keyword>
<keyword id="KW-0808">Transferase</keyword>
<keyword id="KW-0819">tRNA processing</keyword>